<keyword id="KW-0687">Ribonucleoprotein</keyword>
<keyword id="KW-0689">Ribosomal protein</keyword>
<keyword id="KW-0694">RNA-binding</keyword>
<keyword id="KW-0699">rRNA-binding</keyword>
<name>RL21_CYAP4</name>
<dbReference type="EMBL" id="CP001344">
    <property type="protein sequence ID" value="ACL43034.1"/>
    <property type="molecule type" value="Genomic_DNA"/>
</dbReference>
<dbReference type="SMR" id="B8HUY7"/>
<dbReference type="STRING" id="395961.Cyan7425_0646"/>
<dbReference type="KEGG" id="cyn:Cyan7425_0646"/>
<dbReference type="eggNOG" id="COG0261">
    <property type="taxonomic scope" value="Bacteria"/>
</dbReference>
<dbReference type="HOGENOM" id="CLU_061463_1_2_3"/>
<dbReference type="OrthoDB" id="9813334at2"/>
<dbReference type="GO" id="GO:0005737">
    <property type="term" value="C:cytoplasm"/>
    <property type="evidence" value="ECO:0007669"/>
    <property type="project" value="UniProtKB-ARBA"/>
</dbReference>
<dbReference type="GO" id="GO:1990904">
    <property type="term" value="C:ribonucleoprotein complex"/>
    <property type="evidence" value="ECO:0007669"/>
    <property type="project" value="UniProtKB-KW"/>
</dbReference>
<dbReference type="GO" id="GO:0005840">
    <property type="term" value="C:ribosome"/>
    <property type="evidence" value="ECO:0007669"/>
    <property type="project" value="UniProtKB-KW"/>
</dbReference>
<dbReference type="GO" id="GO:0019843">
    <property type="term" value="F:rRNA binding"/>
    <property type="evidence" value="ECO:0007669"/>
    <property type="project" value="UniProtKB-UniRule"/>
</dbReference>
<dbReference type="GO" id="GO:0003735">
    <property type="term" value="F:structural constituent of ribosome"/>
    <property type="evidence" value="ECO:0007669"/>
    <property type="project" value="InterPro"/>
</dbReference>
<dbReference type="GO" id="GO:0006412">
    <property type="term" value="P:translation"/>
    <property type="evidence" value="ECO:0007669"/>
    <property type="project" value="UniProtKB-UniRule"/>
</dbReference>
<dbReference type="HAMAP" id="MF_01363">
    <property type="entry name" value="Ribosomal_bL21"/>
    <property type="match status" value="1"/>
</dbReference>
<dbReference type="InterPro" id="IPR028909">
    <property type="entry name" value="bL21-like"/>
</dbReference>
<dbReference type="InterPro" id="IPR036164">
    <property type="entry name" value="bL21-like_sf"/>
</dbReference>
<dbReference type="InterPro" id="IPR001787">
    <property type="entry name" value="Ribosomal_bL21"/>
</dbReference>
<dbReference type="InterPro" id="IPR018258">
    <property type="entry name" value="Ribosomal_bL21_CS"/>
</dbReference>
<dbReference type="NCBIfam" id="TIGR00061">
    <property type="entry name" value="L21"/>
    <property type="match status" value="1"/>
</dbReference>
<dbReference type="PANTHER" id="PTHR21349">
    <property type="entry name" value="50S RIBOSOMAL PROTEIN L21"/>
    <property type="match status" value="1"/>
</dbReference>
<dbReference type="PANTHER" id="PTHR21349:SF0">
    <property type="entry name" value="LARGE RIBOSOMAL SUBUNIT PROTEIN BL21M"/>
    <property type="match status" value="1"/>
</dbReference>
<dbReference type="Pfam" id="PF00829">
    <property type="entry name" value="Ribosomal_L21p"/>
    <property type="match status" value="1"/>
</dbReference>
<dbReference type="SUPFAM" id="SSF141091">
    <property type="entry name" value="L21p-like"/>
    <property type="match status" value="1"/>
</dbReference>
<dbReference type="PROSITE" id="PS01169">
    <property type="entry name" value="RIBOSOMAL_L21"/>
    <property type="match status" value="1"/>
</dbReference>
<comment type="function">
    <text evidence="1">This protein binds to 23S rRNA in the presence of protein L20.</text>
</comment>
<comment type="subunit">
    <text evidence="1">Part of the 50S ribosomal subunit. Contacts protein L20.</text>
</comment>
<comment type="similarity">
    <text evidence="1">Belongs to the bacterial ribosomal protein bL21 family.</text>
</comment>
<proteinExistence type="inferred from homology"/>
<accession>B8HUY7</accession>
<protein>
    <recommendedName>
        <fullName evidence="1">Large ribosomal subunit protein bL21</fullName>
    </recommendedName>
    <alternativeName>
        <fullName evidence="3">50S ribosomal protein L21</fullName>
    </alternativeName>
</protein>
<evidence type="ECO:0000255" key="1">
    <source>
        <dbReference type="HAMAP-Rule" id="MF_01363"/>
    </source>
</evidence>
<evidence type="ECO:0000256" key="2">
    <source>
        <dbReference type="SAM" id="MobiDB-lite"/>
    </source>
</evidence>
<evidence type="ECO:0000305" key="3"/>
<reference key="1">
    <citation type="journal article" date="2011" name="MBio">
        <title>Novel metabolic attributes of the genus Cyanothece, comprising a group of unicellular nitrogen-fixing Cyanobacteria.</title>
        <authorList>
            <person name="Bandyopadhyay A."/>
            <person name="Elvitigala T."/>
            <person name="Welsh E."/>
            <person name="Stockel J."/>
            <person name="Liberton M."/>
            <person name="Min H."/>
            <person name="Sherman L.A."/>
            <person name="Pakrasi H.B."/>
        </authorList>
    </citation>
    <scope>NUCLEOTIDE SEQUENCE [LARGE SCALE GENOMIC DNA]</scope>
    <source>
        <strain>PCC 7425 / ATCC 29141</strain>
    </source>
</reference>
<organism>
    <name type="scientific">Cyanothece sp. (strain PCC 7425 / ATCC 29141)</name>
    <dbReference type="NCBI Taxonomy" id="395961"/>
    <lineage>
        <taxon>Bacteria</taxon>
        <taxon>Bacillati</taxon>
        <taxon>Cyanobacteriota</taxon>
        <taxon>Cyanophyceae</taxon>
        <taxon>Gomontiellales</taxon>
        <taxon>Cyanothecaceae</taxon>
        <taxon>Cyanothece</taxon>
    </lineage>
</organism>
<feature type="chain" id="PRO_1000166717" description="Large ribosomal subunit protein bL21">
    <location>
        <begin position="1"/>
        <end position="130"/>
    </location>
</feature>
<feature type="region of interest" description="Disordered" evidence="2">
    <location>
        <begin position="110"/>
        <end position="130"/>
    </location>
</feature>
<feature type="compositionally biased region" description="Low complexity" evidence="2">
    <location>
        <begin position="112"/>
        <end position="130"/>
    </location>
</feature>
<gene>
    <name evidence="1" type="primary">rplU</name>
    <name evidence="1" type="synonym">rpl21</name>
    <name type="ordered locus">Cyan7425_0646</name>
</gene>
<sequence>MTYAIVATAGKQFRVEPGRFYDVDRMNVEPEQTVSLDQVLLVHDGDTIAVGQPLVEGATVEATVMQHLRGRKVIVYKMRPKKKTRKKQGHRQELTRLMINAIHLNGSSAKTAAQPAADEAVAANEVDSEA</sequence>